<evidence type="ECO:0000256" key="1">
    <source>
        <dbReference type="SAM" id="MobiDB-lite"/>
    </source>
</evidence>
<evidence type="ECO:0000269" key="2">
    <source>
    </source>
</evidence>
<evidence type="ECO:0000305" key="3"/>
<evidence type="ECO:0000305" key="4">
    <source>
    </source>
</evidence>
<evidence type="ECO:0000312" key="5">
    <source>
        <dbReference type="EMBL" id="AYP73031.1"/>
    </source>
</evidence>
<accession>A0A3G3C7T9</accession>
<name>CX64_CONAA</name>
<feature type="propeptide" id="PRO_0000453600" evidence="4">
    <location>
        <begin position="1" status="less than"/>
        <end position="36"/>
    </location>
</feature>
<feature type="peptide" id="PRO_0000453601" description="Conotoxin Am6.4">
    <location>
        <begin position="37"/>
        <end position="65"/>
    </location>
</feature>
<feature type="region of interest" description="Disordered" evidence="1">
    <location>
        <begin position="1"/>
        <end position="33"/>
    </location>
</feature>
<feature type="compositionally biased region" description="Acidic residues" evidence="1">
    <location>
        <begin position="14"/>
        <end position="26"/>
    </location>
</feature>
<feature type="disulfide bond" evidence="3">
    <location>
        <begin position="40"/>
        <end position="50"/>
    </location>
</feature>
<feature type="disulfide bond" evidence="3">
    <location>
        <begin position="45"/>
        <end position="59"/>
    </location>
</feature>
<feature type="disulfide bond" evidence="3">
    <location>
        <begin position="49"/>
        <end position="64"/>
    </location>
</feature>
<feature type="non-terminal residue" evidence="5">
    <location>
        <position position="1"/>
    </location>
</feature>
<protein>
    <recommendedName>
        <fullName evidence="3">Conotoxin Am6.4</fullName>
    </recommendedName>
</protein>
<comment type="function">
    <text evidence="3">Probable toxin that inhibits ion channels.</text>
</comment>
<comment type="subcellular location">
    <subcellularLocation>
        <location evidence="2">Secreted</location>
    </subcellularLocation>
</comment>
<comment type="tissue specificity">
    <text evidence="4">Expressed by the venom duct.</text>
</comment>
<comment type="domain">
    <text evidence="3">The cysteine framework is VI/VII (C-C-CC-C-C).</text>
</comment>
<comment type="domain">
    <text evidence="3">The presence of a 'disulfide through disulfide knot' structurally defines this protein as a knottin.</text>
</comment>
<comment type="PTM">
    <text evidence="2">Is not hydroxylated.</text>
</comment>
<reference key="1">
    <citation type="journal article" date="2019" name="J. Proteomics">
        <title>Cone snail prolyl-4-hydroxylase alpha-subunit sequences derived from transcriptomic data and mass spectrometric analysis of variable proline hydroxylation in C. amadis venom.</title>
        <authorList>
            <person name="Vijayasarathy M."/>
            <person name="Balaram P."/>
        </authorList>
    </citation>
    <scope>NUCLEOTIDE SEQUENCE [MRNA]</scope>
    <scope>PROTEIN SEQUENCE OF 37-65</scope>
    <scope>SUBCELLULAR LOCATION</scope>
    <scope>IDENTIFICATION BY MASS SPECTROMETRY</scope>
    <source>
        <tissue>Venom</tissue>
        <tissue>Venom duct</tissue>
    </source>
</reference>
<proteinExistence type="evidence at protein level"/>
<organism>
    <name type="scientific">Conus amadis</name>
    <name type="common">Amadis cone</name>
    <dbReference type="NCBI Taxonomy" id="198732"/>
    <lineage>
        <taxon>Eukaryota</taxon>
        <taxon>Metazoa</taxon>
        <taxon>Spiralia</taxon>
        <taxon>Lophotrochozoa</taxon>
        <taxon>Mollusca</taxon>
        <taxon>Gastropoda</taxon>
        <taxon>Caenogastropoda</taxon>
        <taxon>Neogastropoda</taxon>
        <taxon>Conoidea</taxon>
        <taxon>Conidae</taxon>
        <taxon>Conus</taxon>
        <taxon>Leptoconus</taxon>
    </lineage>
</organism>
<sequence>STGKRNAGKLTVTDDVEADRDTDPDDKDPSVHNSWRTVDCGGVPCEFGCCRIIDGKEKCREIDCD</sequence>
<dbReference type="EMBL" id="MH282824">
    <property type="protein sequence ID" value="AYP73031.1"/>
    <property type="molecule type" value="mRNA"/>
</dbReference>
<dbReference type="SMR" id="A0A3G3C7T9"/>
<dbReference type="GO" id="GO:0005576">
    <property type="term" value="C:extracellular region"/>
    <property type="evidence" value="ECO:0007669"/>
    <property type="project" value="UniProtKB-SubCell"/>
</dbReference>
<dbReference type="GO" id="GO:0099106">
    <property type="term" value="F:ion channel regulator activity"/>
    <property type="evidence" value="ECO:0007669"/>
    <property type="project" value="UniProtKB-KW"/>
</dbReference>
<dbReference type="GO" id="GO:0090729">
    <property type="term" value="F:toxin activity"/>
    <property type="evidence" value="ECO:0007669"/>
    <property type="project" value="UniProtKB-KW"/>
</dbReference>
<keyword id="KW-0903">Direct protein sequencing</keyword>
<keyword id="KW-1015">Disulfide bond</keyword>
<keyword id="KW-0872">Ion channel impairing toxin</keyword>
<keyword id="KW-0960">Knottin</keyword>
<keyword id="KW-0964">Secreted</keyword>
<keyword id="KW-0800">Toxin</keyword>